<feature type="chain" id="PRO_0000208001" description="Glucose-1-phosphate thymidylyltransferase">
    <location>
        <begin position="1"/>
        <end position="295"/>
    </location>
</feature>
<feature type="binding site" evidence="1">
    <location>
        <position position="111"/>
    </location>
    <ligand>
        <name>Mg(2+)</name>
        <dbReference type="ChEBI" id="CHEBI:18420"/>
    </ligand>
</feature>
<feature type="binding site" evidence="1">
    <location>
        <position position="226"/>
    </location>
    <ligand>
        <name>Mg(2+)</name>
        <dbReference type="ChEBI" id="CHEBI:18420"/>
    </ligand>
</feature>
<sequence length="295" mass="32508">MTQRKGIILAGGSGTRLYPITKGVSKQLLPVYDKPMIYYPLSVLMLAGIRDILIINTPHEQALFQSLLGDGAQWGVNIQYAVQPSPDGLAQAYLIGRDFVGGKPSCLVLGDNIFHGHGLTDTLRRADAREQGATVFGYWVNDPERYGVAEFDQHGKVIDIAEKPEKPRSNYAVTGLYFYDGKASDYAAALKPSPRGELEITDLNRCYLDAGDLHLEPLGRGYAWLDTGTHQSLHEAANFIETIQMRQGLQVCCPEEIAFGQGWIDAEQLERLAAPLLKNDYGKYLTALAKRGAVH</sequence>
<name>RMLA_XANCP</name>
<dbReference type="EC" id="2.7.7.24" evidence="1"/>
<dbReference type="EMBL" id="AE008922">
    <property type="protein sequence ID" value="AAM39938.1"/>
    <property type="status" value="ALT_INIT"/>
    <property type="molecule type" value="Genomic_DNA"/>
</dbReference>
<dbReference type="RefSeq" id="NP_636014.1">
    <property type="nucleotide sequence ID" value="NC_003902.1"/>
</dbReference>
<dbReference type="SMR" id="P0C7J4"/>
<dbReference type="STRING" id="190485.XCC0622"/>
<dbReference type="EnsemblBacteria" id="AAM39938">
    <property type="protein sequence ID" value="AAM39938"/>
    <property type="gene ID" value="XCC0622"/>
</dbReference>
<dbReference type="KEGG" id="xcc:XCC0622"/>
<dbReference type="PATRIC" id="fig|190485.4.peg.682"/>
<dbReference type="eggNOG" id="COG1209">
    <property type="taxonomic scope" value="Bacteria"/>
</dbReference>
<dbReference type="HOGENOM" id="CLU_029499_9_0_6"/>
<dbReference type="OrthoDB" id="9803871at2"/>
<dbReference type="UniPathway" id="UPA00124"/>
<dbReference type="UniPathway" id="UPA00281"/>
<dbReference type="Proteomes" id="UP000001010">
    <property type="component" value="Chromosome"/>
</dbReference>
<dbReference type="GO" id="GO:0008879">
    <property type="term" value="F:glucose-1-phosphate thymidylyltransferase activity"/>
    <property type="evidence" value="ECO:0007669"/>
    <property type="project" value="UniProtKB-EC"/>
</dbReference>
<dbReference type="GO" id="GO:0046872">
    <property type="term" value="F:metal ion binding"/>
    <property type="evidence" value="ECO:0007669"/>
    <property type="project" value="UniProtKB-KW"/>
</dbReference>
<dbReference type="GO" id="GO:0019305">
    <property type="term" value="P:dTDP-rhamnose biosynthetic process"/>
    <property type="evidence" value="ECO:0007669"/>
    <property type="project" value="UniProtKB-UniPathway"/>
</dbReference>
<dbReference type="GO" id="GO:0009243">
    <property type="term" value="P:O antigen biosynthetic process"/>
    <property type="evidence" value="ECO:0007669"/>
    <property type="project" value="UniProtKB-UniPathway"/>
</dbReference>
<dbReference type="CDD" id="cd02538">
    <property type="entry name" value="G1P_TT_short"/>
    <property type="match status" value="1"/>
</dbReference>
<dbReference type="FunFam" id="3.90.550.10:FF:000023">
    <property type="entry name" value="Glucose-1-phosphate thymidylyltransferase"/>
    <property type="match status" value="1"/>
</dbReference>
<dbReference type="Gene3D" id="3.90.550.10">
    <property type="entry name" value="Spore Coat Polysaccharide Biosynthesis Protein SpsA, Chain A"/>
    <property type="match status" value="1"/>
</dbReference>
<dbReference type="InterPro" id="IPR005907">
    <property type="entry name" value="G1P_thy_trans_s"/>
</dbReference>
<dbReference type="InterPro" id="IPR005835">
    <property type="entry name" value="NTP_transferase_dom"/>
</dbReference>
<dbReference type="InterPro" id="IPR029044">
    <property type="entry name" value="Nucleotide-diphossugar_trans"/>
</dbReference>
<dbReference type="NCBIfam" id="TIGR01207">
    <property type="entry name" value="rmlA"/>
    <property type="match status" value="1"/>
</dbReference>
<dbReference type="PANTHER" id="PTHR43532">
    <property type="entry name" value="GLUCOSE-1-PHOSPHATE THYMIDYLYLTRANSFERASE"/>
    <property type="match status" value="1"/>
</dbReference>
<dbReference type="PANTHER" id="PTHR43532:SF1">
    <property type="entry name" value="GLUCOSE-1-PHOSPHATE THYMIDYLYLTRANSFERASE 1"/>
    <property type="match status" value="1"/>
</dbReference>
<dbReference type="Pfam" id="PF00483">
    <property type="entry name" value="NTP_transferase"/>
    <property type="match status" value="1"/>
</dbReference>
<dbReference type="SUPFAM" id="SSF53448">
    <property type="entry name" value="Nucleotide-diphospho-sugar transferases"/>
    <property type="match status" value="1"/>
</dbReference>
<protein>
    <recommendedName>
        <fullName>Glucose-1-phosphate thymidylyltransferase</fullName>
        <ecNumber evidence="1">2.7.7.24</ecNumber>
    </recommendedName>
    <alternativeName>
        <fullName>dTDP-glucose pyrophosphorylase</fullName>
    </alternativeName>
    <alternativeName>
        <fullName>dTDP-glucose synthase</fullName>
    </alternativeName>
</protein>
<proteinExistence type="inferred from homology"/>
<reference key="1">
    <citation type="journal article" date="2002" name="Nature">
        <title>Comparison of the genomes of two Xanthomonas pathogens with differing host specificities.</title>
        <authorList>
            <person name="da Silva A.C.R."/>
            <person name="Ferro J.A."/>
            <person name="Reinach F.C."/>
            <person name="Farah C.S."/>
            <person name="Furlan L.R."/>
            <person name="Quaggio R.B."/>
            <person name="Monteiro-Vitorello C.B."/>
            <person name="Van Sluys M.A."/>
            <person name="Almeida N.F. Jr."/>
            <person name="Alves L.M.C."/>
            <person name="do Amaral A.M."/>
            <person name="Bertolini M.C."/>
            <person name="Camargo L.E.A."/>
            <person name="Camarotte G."/>
            <person name="Cannavan F."/>
            <person name="Cardozo J."/>
            <person name="Chambergo F."/>
            <person name="Ciapina L.P."/>
            <person name="Cicarelli R.M.B."/>
            <person name="Coutinho L.L."/>
            <person name="Cursino-Santos J.R."/>
            <person name="El-Dorry H."/>
            <person name="Faria J.B."/>
            <person name="Ferreira A.J.S."/>
            <person name="Ferreira R.C.C."/>
            <person name="Ferro M.I.T."/>
            <person name="Formighieri E.F."/>
            <person name="Franco M.C."/>
            <person name="Greggio C.C."/>
            <person name="Gruber A."/>
            <person name="Katsuyama A.M."/>
            <person name="Kishi L.T."/>
            <person name="Leite R.P."/>
            <person name="Lemos E.G.M."/>
            <person name="Lemos M.V.F."/>
            <person name="Locali E.C."/>
            <person name="Machado M.A."/>
            <person name="Madeira A.M.B.N."/>
            <person name="Martinez-Rossi N.M."/>
            <person name="Martins E.C."/>
            <person name="Meidanis J."/>
            <person name="Menck C.F.M."/>
            <person name="Miyaki C.Y."/>
            <person name="Moon D.H."/>
            <person name="Moreira L.M."/>
            <person name="Novo M.T.M."/>
            <person name="Okura V.K."/>
            <person name="Oliveira M.C."/>
            <person name="Oliveira V.R."/>
            <person name="Pereira H.A."/>
            <person name="Rossi A."/>
            <person name="Sena J.A.D."/>
            <person name="Silva C."/>
            <person name="de Souza R.F."/>
            <person name="Spinola L.A.F."/>
            <person name="Takita M.A."/>
            <person name="Tamura R.E."/>
            <person name="Teixeira E.C."/>
            <person name="Tezza R.I.D."/>
            <person name="Trindade dos Santos M."/>
            <person name="Truffi D."/>
            <person name="Tsai S.M."/>
            <person name="White F.F."/>
            <person name="Setubal J.C."/>
            <person name="Kitajima J.P."/>
        </authorList>
    </citation>
    <scope>NUCLEOTIDE SEQUENCE [LARGE SCALE GENOMIC DNA]</scope>
    <source>
        <strain>ATCC 33913 / DSM 3586 / NCPPB 528 / LMG 568 / P 25</strain>
    </source>
</reference>
<keyword id="KW-0448">Lipopolysaccharide biosynthesis</keyword>
<keyword id="KW-0460">Magnesium</keyword>
<keyword id="KW-0479">Metal-binding</keyword>
<keyword id="KW-0548">Nucleotidyltransferase</keyword>
<keyword id="KW-1185">Reference proteome</keyword>
<keyword id="KW-0808">Transferase</keyword>
<accession>P0C7J4</accession>
<accession>P55256</accession>
<evidence type="ECO:0000250" key="1">
    <source>
        <dbReference type="UniProtKB" id="P61887"/>
    </source>
</evidence>
<evidence type="ECO:0000305" key="2"/>
<comment type="function">
    <text evidence="1">Catalyzes the formation of dTDP-glucose, from dTTP and glucose 1-phosphate, as well as its pyrophosphorolysis.</text>
</comment>
<comment type="catalytic activity">
    <reaction evidence="1">
        <text>dTTP + alpha-D-glucose 1-phosphate + H(+) = dTDP-alpha-D-glucose + diphosphate</text>
        <dbReference type="Rhea" id="RHEA:15225"/>
        <dbReference type="ChEBI" id="CHEBI:15378"/>
        <dbReference type="ChEBI" id="CHEBI:33019"/>
        <dbReference type="ChEBI" id="CHEBI:37568"/>
        <dbReference type="ChEBI" id="CHEBI:57477"/>
        <dbReference type="ChEBI" id="CHEBI:58601"/>
        <dbReference type="EC" id="2.7.7.24"/>
    </reaction>
</comment>
<comment type="cofactor">
    <cofactor evidence="1">
        <name>Mg(2+)</name>
        <dbReference type="ChEBI" id="CHEBI:18420"/>
    </cofactor>
    <text evidence="1">Binds 1 Mg(2+) ion per subunit.</text>
</comment>
<comment type="pathway">
    <text>Carbohydrate biosynthesis; dTDP-L-rhamnose biosynthesis.</text>
</comment>
<comment type="pathway">
    <text>Bacterial outer membrane biogenesis; LPS O-antigen biosynthesis.</text>
</comment>
<comment type="subunit">
    <text evidence="1">Homotetramer.</text>
</comment>
<comment type="similarity">
    <text evidence="2">Belongs to the glucose-1-phosphate thymidylyltransferase family.</text>
</comment>
<comment type="sequence caution" evidence="2">
    <conflict type="erroneous initiation">
        <sequence resource="EMBL-CDS" id="AAM39938"/>
    </conflict>
</comment>
<gene>
    <name type="primary">rmlA</name>
    <name type="ordered locus">XCC0622</name>
</gene>
<organism>
    <name type="scientific">Xanthomonas campestris pv. campestris (strain ATCC 33913 / DSM 3586 / NCPPB 528 / LMG 568 / P 25)</name>
    <dbReference type="NCBI Taxonomy" id="190485"/>
    <lineage>
        <taxon>Bacteria</taxon>
        <taxon>Pseudomonadati</taxon>
        <taxon>Pseudomonadota</taxon>
        <taxon>Gammaproteobacteria</taxon>
        <taxon>Lysobacterales</taxon>
        <taxon>Lysobacteraceae</taxon>
        <taxon>Xanthomonas</taxon>
    </lineage>
</organism>